<feature type="chain" id="PRO_0000142778" description="Matrix protein">
    <location>
        <begin position="1"/>
        <end position="382"/>
    </location>
</feature>
<comment type="function">
    <text>The M protein has a crucial role in virus assembly and interacts with the RNP complex as well as with the viral membrane.</text>
</comment>
<comment type="subcellular location">
    <subcellularLocation>
        <location evidence="1">Virion</location>
    </subcellularLocation>
</comment>
<comment type="similarity">
    <text evidence="1">Belongs to the morbillivirus/respirovirus/rubulavirus M protein family.</text>
</comment>
<proteinExistence type="evidence at transcript level"/>
<keyword id="KW-1185">Reference proteome</keyword>
<keyword id="KW-0468">Viral matrix protein</keyword>
<keyword id="KW-0946">Virion</keyword>
<organismHost>
    <name type="scientific">Simiiformes</name>
    <dbReference type="NCBI Taxonomy" id="314293"/>
</organismHost>
<reference key="1">
    <citation type="journal article" date="1990" name="Virology">
        <title>Antigenic and structural properties of a paramyxovirus simian virus 41 (SV41) reveal a close relationship with human parainfluenza type 2 virus.</title>
        <authorList>
            <person name="Tsurudome M."/>
            <person name="Bando H."/>
            <person name="Nishio M."/>
            <person name="Iwamoto Y."/>
            <person name="Kawano M."/>
            <person name="Kondo K."/>
            <person name="Komada H."/>
            <person name="Ito Y."/>
        </authorList>
    </citation>
    <scope>NUCLEOTIDE SEQUENCE</scope>
    <source>
        <strain>Toshiba/Chanock</strain>
    </source>
</reference>
<reference key="2">
    <citation type="journal article" date="1991" name="Virology">
        <title>Transcripts of simian virus 41 (SV41) matrix gene are exclusively dicistronic with the fusion gene which is also transcribed as a monocistron.</title>
        <authorList>
            <person name="Tsurudome M."/>
            <person name="Bando H."/>
            <person name="Kawano M."/>
            <person name="Matsumura H."/>
            <person name="Komada H."/>
            <person name="Nishio M."/>
            <person name="Ito Y."/>
        </authorList>
    </citation>
    <scope>NUCLEOTIDE SEQUENCE [MRNA]</scope>
    <source>
        <strain>Toshiba/Chanock</strain>
    </source>
</reference>
<gene>
    <name type="primary">M</name>
</gene>
<accession>P25182</accession>
<sequence>MPTISIPADPASPDQGLKPFPIQLDSKDGKSGKLVKQIRIKYLTEPNSRSPPLTFINTYGFIYARDLSGGIMNEQSSGIQSGSVTACMMTLGPGPDIKNANRVLAALNGFYVKVRKTSSLKEEAVFELVNVPKLLANHALCKQGRLVCSAEKFVKNPSKMMAGQEYLYFPTFVSLTYCPSNLNYQVAKPILKIRSRFVYSIHMEIIFRLLCKPDSPLLKTYATDPEGRGCLASVWIHVCNILKNKKIKQRGVDSYFSSKAISMQLTVSIADTWGPTVIIKANGHIPKTAAPFFSKDGVACHPLQDVSPALTKSLWSVGCEITKARLILQESNISDLLKTQDLITDQIKIKKGHSHFGRSSFNPFKKAISLPNLTQLGQDDED</sequence>
<protein>
    <recommendedName>
        <fullName>Matrix protein</fullName>
    </recommendedName>
</protein>
<organism>
    <name type="scientific">Simian virus 41</name>
    <name type="common">SV41</name>
    <dbReference type="NCBI Taxonomy" id="3052561"/>
    <lineage>
        <taxon>Viruses</taxon>
        <taxon>Riboviria</taxon>
        <taxon>Orthornavirae</taxon>
        <taxon>Negarnaviricota</taxon>
        <taxon>Haploviricotina</taxon>
        <taxon>Monjiviricetes</taxon>
        <taxon>Mononegavirales</taxon>
        <taxon>Paramyxoviridae</taxon>
        <taxon>Rubulavirinae</taxon>
        <taxon>Orthorubulavirus</taxon>
    </lineage>
</organism>
<evidence type="ECO:0000305" key="1"/>
<name>MATRX_SV41</name>
<dbReference type="EMBL" id="S48627">
    <property type="protein sequence ID" value="AAB19493.1"/>
    <property type="molecule type" value="mRNA"/>
</dbReference>
<dbReference type="EMBL" id="X64275">
    <property type="protein sequence ID" value="CAA45566.1"/>
    <property type="molecule type" value="Genomic_RNA"/>
</dbReference>
<dbReference type="EMBL" id="M62733">
    <property type="status" value="NOT_ANNOTATED_CDS"/>
    <property type="molecule type" value="Genomic_RNA"/>
</dbReference>
<dbReference type="PIR" id="A40563">
    <property type="entry name" value="MFNZ41"/>
</dbReference>
<dbReference type="SMR" id="P25182"/>
<dbReference type="KEGG" id="vg:3159467"/>
<dbReference type="OrthoDB" id="3682at10239"/>
<dbReference type="Proteomes" id="UP000108270">
    <property type="component" value="Segment"/>
</dbReference>
<dbReference type="GO" id="GO:0044423">
    <property type="term" value="C:virion component"/>
    <property type="evidence" value="ECO:0007669"/>
    <property type="project" value="UniProtKB-KW"/>
</dbReference>
<dbReference type="GO" id="GO:0039660">
    <property type="term" value="F:structural constituent of virion"/>
    <property type="evidence" value="ECO:0007669"/>
    <property type="project" value="UniProtKB-KW"/>
</dbReference>
<dbReference type="GO" id="GO:0019068">
    <property type="term" value="P:virion assembly"/>
    <property type="evidence" value="ECO:0007669"/>
    <property type="project" value="InterPro"/>
</dbReference>
<dbReference type="Gene3D" id="2.70.20.60">
    <property type="entry name" value="Viral matrix protein, C-terminal domain"/>
    <property type="match status" value="1"/>
</dbReference>
<dbReference type="Gene3D" id="2.70.20.50">
    <property type="entry name" value="Viral matrix protein, N-terminal domain"/>
    <property type="match status" value="1"/>
</dbReference>
<dbReference type="InterPro" id="IPR042539">
    <property type="entry name" value="Matrix_C"/>
</dbReference>
<dbReference type="InterPro" id="IPR042540">
    <property type="entry name" value="Matrix_N"/>
</dbReference>
<dbReference type="InterPro" id="IPR055413">
    <property type="entry name" value="Matrix_Paramyxo_C"/>
</dbReference>
<dbReference type="InterPro" id="IPR000982">
    <property type="entry name" value="Matrix_Paramyxo_N"/>
</dbReference>
<dbReference type="Pfam" id="PF23765">
    <property type="entry name" value="Matrix_Paramyxo_C"/>
    <property type="match status" value="1"/>
</dbReference>
<dbReference type="Pfam" id="PF00661">
    <property type="entry name" value="Matrix_Paramyxo_N"/>
    <property type="match status" value="1"/>
</dbReference>